<accession>Q5F8G2</accession>
<protein>
    <recommendedName>
        <fullName evidence="1">Biotin synthase</fullName>
        <ecNumber evidence="1">2.8.1.6</ecNumber>
    </recommendedName>
</protein>
<evidence type="ECO:0000255" key="1">
    <source>
        <dbReference type="HAMAP-Rule" id="MF_01694"/>
    </source>
</evidence>
<evidence type="ECO:0000255" key="2">
    <source>
        <dbReference type="PROSITE-ProRule" id="PRU01266"/>
    </source>
</evidence>
<comment type="function">
    <text evidence="1">Catalyzes the conversion of dethiobiotin (DTB) to biotin by the insertion of a sulfur atom into dethiobiotin via a radical-based mechanism.</text>
</comment>
<comment type="catalytic activity">
    <reaction evidence="1">
        <text>(4R,5S)-dethiobiotin + (sulfur carrier)-SH + 2 reduced [2Fe-2S]-[ferredoxin] + 2 S-adenosyl-L-methionine = (sulfur carrier)-H + biotin + 2 5'-deoxyadenosine + 2 L-methionine + 2 oxidized [2Fe-2S]-[ferredoxin]</text>
        <dbReference type="Rhea" id="RHEA:22060"/>
        <dbReference type="Rhea" id="RHEA-COMP:10000"/>
        <dbReference type="Rhea" id="RHEA-COMP:10001"/>
        <dbReference type="Rhea" id="RHEA-COMP:14737"/>
        <dbReference type="Rhea" id="RHEA-COMP:14739"/>
        <dbReference type="ChEBI" id="CHEBI:17319"/>
        <dbReference type="ChEBI" id="CHEBI:29917"/>
        <dbReference type="ChEBI" id="CHEBI:33737"/>
        <dbReference type="ChEBI" id="CHEBI:33738"/>
        <dbReference type="ChEBI" id="CHEBI:57586"/>
        <dbReference type="ChEBI" id="CHEBI:57844"/>
        <dbReference type="ChEBI" id="CHEBI:59789"/>
        <dbReference type="ChEBI" id="CHEBI:64428"/>
        <dbReference type="ChEBI" id="CHEBI:149473"/>
        <dbReference type="EC" id="2.8.1.6"/>
    </reaction>
</comment>
<comment type="cofactor">
    <cofactor evidence="1">
        <name>[4Fe-4S] cluster</name>
        <dbReference type="ChEBI" id="CHEBI:49883"/>
    </cofactor>
    <text evidence="1">Binds 1 [4Fe-4S] cluster. The cluster is coordinated with 3 cysteines and an exchangeable S-adenosyl-L-methionine.</text>
</comment>
<comment type="cofactor">
    <cofactor evidence="1">
        <name>[2Fe-2S] cluster</name>
        <dbReference type="ChEBI" id="CHEBI:190135"/>
    </cofactor>
    <text evidence="1">Binds 1 [2Fe-2S] cluster. The cluster is coordinated with 3 cysteines and 1 arginine.</text>
</comment>
<comment type="pathway">
    <text evidence="1">Cofactor biosynthesis; biotin biosynthesis; biotin from 7,8-diaminononanoate: step 2/2.</text>
</comment>
<comment type="subunit">
    <text evidence="1">Homodimer.</text>
</comment>
<comment type="similarity">
    <text evidence="1">Belongs to the radical SAM superfamily. Biotin synthase family.</text>
</comment>
<name>BIOB_NEIG1</name>
<feature type="chain" id="PRO_0000381493" description="Biotin synthase">
    <location>
        <begin position="1"/>
        <end position="350"/>
    </location>
</feature>
<feature type="domain" description="Radical SAM core" evidence="2">
    <location>
        <begin position="54"/>
        <end position="278"/>
    </location>
</feature>
<feature type="binding site" evidence="1">
    <location>
        <position position="69"/>
    </location>
    <ligand>
        <name>[4Fe-4S] cluster</name>
        <dbReference type="ChEBI" id="CHEBI:49883"/>
        <note>4Fe-4S-S-AdoMet</note>
    </ligand>
</feature>
<feature type="binding site" evidence="1">
    <location>
        <position position="73"/>
    </location>
    <ligand>
        <name>[4Fe-4S] cluster</name>
        <dbReference type="ChEBI" id="CHEBI:49883"/>
        <note>4Fe-4S-S-AdoMet</note>
    </ligand>
</feature>
<feature type="binding site" evidence="1">
    <location>
        <position position="76"/>
    </location>
    <ligand>
        <name>[4Fe-4S] cluster</name>
        <dbReference type="ChEBI" id="CHEBI:49883"/>
        <note>4Fe-4S-S-AdoMet</note>
    </ligand>
</feature>
<feature type="binding site" evidence="1">
    <location>
        <position position="113"/>
    </location>
    <ligand>
        <name>[2Fe-2S] cluster</name>
        <dbReference type="ChEBI" id="CHEBI:190135"/>
    </ligand>
</feature>
<feature type="binding site" evidence="1">
    <location>
        <position position="144"/>
    </location>
    <ligand>
        <name>[2Fe-2S] cluster</name>
        <dbReference type="ChEBI" id="CHEBI:190135"/>
    </ligand>
</feature>
<feature type="binding site" evidence="1">
    <location>
        <position position="204"/>
    </location>
    <ligand>
        <name>[2Fe-2S] cluster</name>
        <dbReference type="ChEBI" id="CHEBI:190135"/>
    </ligand>
</feature>
<feature type="binding site" evidence="1">
    <location>
        <position position="276"/>
    </location>
    <ligand>
        <name>[2Fe-2S] cluster</name>
        <dbReference type="ChEBI" id="CHEBI:190135"/>
    </ligand>
</feature>
<keyword id="KW-0001">2Fe-2S</keyword>
<keyword id="KW-0004">4Fe-4S</keyword>
<keyword id="KW-0093">Biotin biosynthesis</keyword>
<keyword id="KW-0408">Iron</keyword>
<keyword id="KW-0411">Iron-sulfur</keyword>
<keyword id="KW-0479">Metal-binding</keyword>
<keyword id="KW-1185">Reference proteome</keyword>
<keyword id="KW-0949">S-adenosyl-L-methionine</keyword>
<keyword id="KW-0808">Transferase</keyword>
<proteinExistence type="inferred from homology"/>
<organism>
    <name type="scientific">Neisseria gonorrhoeae (strain ATCC 700825 / FA 1090)</name>
    <dbReference type="NCBI Taxonomy" id="242231"/>
    <lineage>
        <taxon>Bacteria</taxon>
        <taxon>Pseudomonadati</taxon>
        <taxon>Pseudomonadota</taxon>
        <taxon>Betaproteobacteria</taxon>
        <taxon>Neisseriales</taxon>
        <taxon>Neisseriaceae</taxon>
        <taxon>Neisseria</taxon>
    </lineage>
</organism>
<reference key="1">
    <citation type="submission" date="2003-03" db="EMBL/GenBank/DDBJ databases">
        <title>The complete genome sequence of Neisseria gonorrhoeae.</title>
        <authorList>
            <person name="Lewis L.A."/>
            <person name="Gillaspy A.F."/>
            <person name="McLaughlin R.E."/>
            <person name="Gipson M."/>
            <person name="Ducey T.F."/>
            <person name="Ownbey T."/>
            <person name="Hartman K."/>
            <person name="Nydick C."/>
            <person name="Carson M.B."/>
            <person name="Vaughn J."/>
            <person name="Thomson C."/>
            <person name="Song L."/>
            <person name="Lin S."/>
            <person name="Yuan X."/>
            <person name="Najar F."/>
            <person name="Zhan M."/>
            <person name="Ren Q."/>
            <person name="Zhu H."/>
            <person name="Qi S."/>
            <person name="Kenton S.M."/>
            <person name="Lai H."/>
            <person name="White J.D."/>
            <person name="Clifton S."/>
            <person name="Roe B.A."/>
            <person name="Dyer D.W."/>
        </authorList>
    </citation>
    <scope>NUCLEOTIDE SEQUENCE [LARGE SCALE GENOMIC DNA]</scope>
    <source>
        <strain>ATCC 700825 / FA 1090</strain>
    </source>
</reference>
<dbReference type="EC" id="2.8.1.6" evidence="1"/>
<dbReference type="EMBL" id="AE004969">
    <property type="protein sequence ID" value="AAW89525.1"/>
    <property type="molecule type" value="Genomic_DNA"/>
</dbReference>
<dbReference type="RefSeq" id="WP_010358160.1">
    <property type="nucleotide sequence ID" value="NC_002946.2"/>
</dbReference>
<dbReference type="RefSeq" id="YP_207937.1">
    <property type="nucleotide sequence ID" value="NC_002946.2"/>
</dbReference>
<dbReference type="SMR" id="Q5F8G2"/>
<dbReference type="STRING" id="242231.NGO_0813"/>
<dbReference type="GeneID" id="66753150"/>
<dbReference type="KEGG" id="ngo:NGO_0813"/>
<dbReference type="PATRIC" id="fig|242231.10.peg.961"/>
<dbReference type="HOGENOM" id="CLU_033172_1_2_4"/>
<dbReference type="UniPathway" id="UPA00078">
    <property type="reaction ID" value="UER00162"/>
</dbReference>
<dbReference type="Proteomes" id="UP000000535">
    <property type="component" value="Chromosome"/>
</dbReference>
<dbReference type="GO" id="GO:0051537">
    <property type="term" value="F:2 iron, 2 sulfur cluster binding"/>
    <property type="evidence" value="ECO:0007669"/>
    <property type="project" value="UniProtKB-KW"/>
</dbReference>
<dbReference type="GO" id="GO:0051539">
    <property type="term" value="F:4 iron, 4 sulfur cluster binding"/>
    <property type="evidence" value="ECO:0007669"/>
    <property type="project" value="UniProtKB-KW"/>
</dbReference>
<dbReference type="GO" id="GO:0004076">
    <property type="term" value="F:biotin synthase activity"/>
    <property type="evidence" value="ECO:0007669"/>
    <property type="project" value="UniProtKB-UniRule"/>
</dbReference>
<dbReference type="GO" id="GO:0005506">
    <property type="term" value="F:iron ion binding"/>
    <property type="evidence" value="ECO:0007669"/>
    <property type="project" value="UniProtKB-UniRule"/>
</dbReference>
<dbReference type="GO" id="GO:0009102">
    <property type="term" value="P:biotin biosynthetic process"/>
    <property type="evidence" value="ECO:0007669"/>
    <property type="project" value="UniProtKB-UniRule"/>
</dbReference>
<dbReference type="CDD" id="cd01335">
    <property type="entry name" value="Radical_SAM"/>
    <property type="match status" value="1"/>
</dbReference>
<dbReference type="FunFam" id="3.20.20.70:FF:000011">
    <property type="entry name" value="Biotin synthase"/>
    <property type="match status" value="1"/>
</dbReference>
<dbReference type="Gene3D" id="3.20.20.70">
    <property type="entry name" value="Aldolase class I"/>
    <property type="match status" value="1"/>
</dbReference>
<dbReference type="HAMAP" id="MF_01694">
    <property type="entry name" value="BioB"/>
    <property type="match status" value="1"/>
</dbReference>
<dbReference type="InterPro" id="IPR013785">
    <property type="entry name" value="Aldolase_TIM"/>
</dbReference>
<dbReference type="InterPro" id="IPR010722">
    <property type="entry name" value="BATS_dom"/>
</dbReference>
<dbReference type="InterPro" id="IPR002684">
    <property type="entry name" value="Biotin_synth/BioAB"/>
</dbReference>
<dbReference type="InterPro" id="IPR024177">
    <property type="entry name" value="Biotin_synthase"/>
</dbReference>
<dbReference type="InterPro" id="IPR006638">
    <property type="entry name" value="Elp3/MiaA/NifB-like_rSAM"/>
</dbReference>
<dbReference type="InterPro" id="IPR007197">
    <property type="entry name" value="rSAM"/>
</dbReference>
<dbReference type="NCBIfam" id="TIGR00433">
    <property type="entry name" value="bioB"/>
    <property type="match status" value="1"/>
</dbReference>
<dbReference type="PANTHER" id="PTHR22976">
    <property type="entry name" value="BIOTIN SYNTHASE"/>
    <property type="match status" value="1"/>
</dbReference>
<dbReference type="PANTHER" id="PTHR22976:SF2">
    <property type="entry name" value="BIOTIN SYNTHASE, MITOCHONDRIAL"/>
    <property type="match status" value="1"/>
</dbReference>
<dbReference type="Pfam" id="PF06968">
    <property type="entry name" value="BATS"/>
    <property type="match status" value="1"/>
</dbReference>
<dbReference type="Pfam" id="PF04055">
    <property type="entry name" value="Radical_SAM"/>
    <property type="match status" value="1"/>
</dbReference>
<dbReference type="PIRSF" id="PIRSF001619">
    <property type="entry name" value="Biotin_synth"/>
    <property type="match status" value="1"/>
</dbReference>
<dbReference type="SFLD" id="SFLDF00272">
    <property type="entry name" value="biotin_synthase"/>
    <property type="match status" value="1"/>
</dbReference>
<dbReference type="SFLD" id="SFLDG01278">
    <property type="entry name" value="biotin_synthase_like"/>
    <property type="match status" value="1"/>
</dbReference>
<dbReference type="SMART" id="SM00876">
    <property type="entry name" value="BATS"/>
    <property type="match status" value="1"/>
</dbReference>
<dbReference type="SMART" id="SM00729">
    <property type="entry name" value="Elp3"/>
    <property type="match status" value="1"/>
</dbReference>
<dbReference type="SUPFAM" id="SSF102114">
    <property type="entry name" value="Radical SAM enzymes"/>
    <property type="match status" value="1"/>
</dbReference>
<dbReference type="PROSITE" id="PS51918">
    <property type="entry name" value="RADICAL_SAM"/>
    <property type="match status" value="1"/>
</dbReference>
<gene>
    <name evidence="1" type="primary">bioB</name>
    <name type="ordered locus">NGO_0813</name>
</gene>
<sequence length="350" mass="38781">MTVSPVALRRKTECKPHPTARYWKKCDVEALFGLPFLELVYQAAEVHRQNFNPREIQLSTLLSIKTGGCPEDCAYCPQSAHHNTNLGKEQMMDVDEIVEKAKIAKSRGASRFCMGAAWRGPKPKDVETVSAIIKAVKGLGMETCGTFGMLEEGMAEDLKEAGLDYYNHNLDTDPDRYNDIIHTRRHEDRMDTLGKVRNAGLKVCCGGIVGMNETRAERAGLIASLANLDPQPESVPINRLVKVEGTPLADAEDLDWTEFVRTVSVARITMPQSYVRLSAGRSNMPEAMQAMCFMAGANSIFYGDKLLTTGNPDEDGDRILMEKLNLYPLQFEPEGEVAEVEKASGIKADY</sequence>